<comment type="function">
    <text evidence="1">Acts as a critical modulator of FOXO3-induced autophagy via increased cellular ROS.</text>
</comment>
<comment type="subcellular location">
    <subcellularLocation>
        <location evidence="1">Cytoplasm</location>
    </subcellularLocation>
    <subcellularLocation>
        <location evidence="1">Peroxisome</location>
    </subcellularLocation>
    <subcellularLocation>
        <location evidence="1">Mitochondrion</location>
    </subcellularLocation>
    <text evidence="1">May localize to aggresomes.</text>
</comment>
<comment type="induction">
    <text evidence="3">Up-regulated by hypoxia.</text>
</comment>
<keyword id="KW-0072">Autophagy</keyword>
<keyword id="KW-0963">Cytoplasm</keyword>
<keyword id="KW-0496">Mitochondrion</keyword>
<keyword id="KW-0576">Peroxisome</keyword>
<keyword id="KW-1185">Reference proteome</keyword>
<organism>
    <name type="scientific">Mus musculus</name>
    <name type="common">Mouse</name>
    <dbReference type="NCBI Taxonomy" id="10090"/>
    <lineage>
        <taxon>Eukaryota</taxon>
        <taxon>Metazoa</taxon>
        <taxon>Chordata</taxon>
        <taxon>Craniata</taxon>
        <taxon>Vertebrata</taxon>
        <taxon>Euteleostomi</taxon>
        <taxon>Mammalia</taxon>
        <taxon>Eutheria</taxon>
        <taxon>Euarchontoglires</taxon>
        <taxon>Glires</taxon>
        <taxon>Rodentia</taxon>
        <taxon>Myomorpha</taxon>
        <taxon>Muroidea</taxon>
        <taxon>Muridae</taxon>
        <taxon>Murinae</taxon>
        <taxon>Mus</taxon>
        <taxon>Mus</taxon>
    </lineage>
</organism>
<reference key="1">
    <citation type="submission" date="1999-03" db="EMBL/GenBank/DDBJ databases">
        <title>Molecular cloning and characterization of a novel fat-specific expressed gene transcript.</title>
        <authorList>
            <person name="Matsuda M."/>
            <person name="Kuriyama H."/>
            <person name="Kishida K."/>
            <person name="Funahashi T."/>
            <person name="Shimomura I."/>
            <person name="Yamashita S."/>
            <person name="Matsuzawa Y."/>
        </authorList>
    </citation>
    <scope>NUCLEOTIDE SEQUENCE [MRNA]</scope>
    <source>
        <tissue>Adipose tissue</tissue>
    </source>
</reference>
<reference key="2">
    <citation type="journal article" date="2005" name="Science">
        <title>The transcriptional landscape of the mammalian genome.</title>
        <authorList>
            <person name="Carninci P."/>
            <person name="Kasukawa T."/>
            <person name="Katayama S."/>
            <person name="Gough J."/>
            <person name="Frith M.C."/>
            <person name="Maeda N."/>
            <person name="Oyama R."/>
            <person name="Ravasi T."/>
            <person name="Lenhard B."/>
            <person name="Wells C."/>
            <person name="Kodzius R."/>
            <person name="Shimokawa K."/>
            <person name="Bajic V.B."/>
            <person name="Brenner S.E."/>
            <person name="Batalov S."/>
            <person name="Forrest A.R."/>
            <person name="Zavolan M."/>
            <person name="Davis M.J."/>
            <person name="Wilming L.G."/>
            <person name="Aidinis V."/>
            <person name="Allen J.E."/>
            <person name="Ambesi-Impiombato A."/>
            <person name="Apweiler R."/>
            <person name="Aturaliya R.N."/>
            <person name="Bailey T.L."/>
            <person name="Bansal M."/>
            <person name="Baxter L."/>
            <person name="Beisel K.W."/>
            <person name="Bersano T."/>
            <person name="Bono H."/>
            <person name="Chalk A.M."/>
            <person name="Chiu K.P."/>
            <person name="Choudhary V."/>
            <person name="Christoffels A."/>
            <person name="Clutterbuck D.R."/>
            <person name="Crowe M.L."/>
            <person name="Dalla E."/>
            <person name="Dalrymple B.P."/>
            <person name="de Bono B."/>
            <person name="Della Gatta G."/>
            <person name="di Bernardo D."/>
            <person name="Down T."/>
            <person name="Engstrom P."/>
            <person name="Fagiolini M."/>
            <person name="Faulkner G."/>
            <person name="Fletcher C.F."/>
            <person name="Fukushima T."/>
            <person name="Furuno M."/>
            <person name="Futaki S."/>
            <person name="Gariboldi M."/>
            <person name="Georgii-Hemming P."/>
            <person name="Gingeras T.R."/>
            <person name="Gojobori T."/>
            <person name="Green R.E."/>
            <person name="Gustincich S."/>
            <person name="Harbers M."/>
            <person name="Hayashi Y."/>
            <person name="Hensch T.K."/>
            <person name="Hirokawa N."/>
            <person name="Hill D."/>
            <person name="Huminiecki L."/>
            <person name="Iacono M."/>
            <person name="Ikeo K."/>
            <person name="Iwama A."/>
            <person name="Ishikawa T."/>
            <person name="Jakt M."/>
            <person name="Kanapin A."/>
            <person name="Katoh M."/>
            <person name="Kawasawa Y."/>
            <person name="Kelso J."/>
            <person name="Kitamura H."/>
            <person name="Kitano H."/>
            <person name="Kollias G."/>
            <person name="Krishnan S.P."/>
            <person name="Kruger A."/>
            <person name="Kummerfeld S.K."/>
            <person name="Kurochkin I.V."/>
            <person name="Lareau L.F."/>
            <person name="Lazarevic D."/>
            <person name="Lipovich L."/>
            <person name="Liu J."/>
            <person name="Liuni S."/>
            <person name="McWilliam S."/>
            <person name="Madan Babu M."/>
            <person name="Madera M."/>
            <person name="Marchionni L."/>
            <person name="Matsuda H."/>
            <person name="Matsuzawa S."/>
            <person name="Miki H."/>
            <person name="Mignone F."/>
            <person name="Miyake S."/>
            <person name="Morris K."/>
            <person name="Mottagui-Tabar S."/>
            <person name="Mulder N."/>
            <person name="Nakano N."/>
            <person name="Nakauchi H."/>
            <person name="Ng P."/>
            <person name="Nilsson R."/>
            <person name="Nishiguchi S."/>
            <person name="Nishikawa S."/>
            <person name="Nori F."/>
            <person name="Ohara O."/>
            <person name="Okazaki Y."/>
            <person name="Orlando V."/>
            <person name="Pang K.C."/>
            <person name="Pavan W.J."/>
            <person name="Pavesi G."/>
            <person name="Pesole G."/>
            <person name="Petrovsky N."/>
            <person name="Piazza S."/>
            <person name="Reed J."/>
            <person name="Reid J.F."/>
            <person name="Ring B.Z."/>
            <person name="Ringwald M."/>
            <person name="Rost B."/>
            <person name="Ruan Y."/>
            <person name="Salzberg S.L."/>
            <person name="Sandelin A."/>
            <person name="Schneider C."/>
            <person name="Schoenbach C."/>
            <person name="Sekiguchi K."/>
            <person name="Semple C.A."/>
            <person name="Seno S."/>
            <person name="Sessa L."/>
            <person name="Sheng Y."/>
            <person name="Shibata Y."/>
            <person name="Shimada H."/>
            <person name="Shimada K."/>
            <person name="Silva D."/>
            <person name="Sinclair B."/>
            <person name="Sperling S."/>
            <person name="Stupka E."/>
            <person name="Sugiura K."/>
            <person name="Sultana R."/>
            <person name="Takenaka Y."/>
            <person name="Taki K."/>
            <person name="Tammoja K."/>
            <person name="Tan S.L."/>
            <person name="Tang S."/>
            <person name="Taylor M.S."/>
            <person name="Tegner J."/>
            <person name="Teichmann S.A."/>
            <person name="Ueda H.R."/>
            <person name="van Nimwegen E."/>
            <person name="Verardo R."/>
            <person name="Wei C.L."/>
            <person name="Yagi K."/>
            <person name="Yamanishi H."/>
            <person name="Zabarovsky E."/>
            <person name="Zhu S."/>
            <person name="Zimmer A."/>
            <person name="Hide W."/>
            <person name="Bult C."/>
            <person name="Grimmond S.M."/>
            <person name="Teasdale R.D."/>
            <person name="Liu E.T."/>
            <person name="Brusic V."/>
            <person name="Quackenbush J."/>
            <person name="Wahlestedt C."/>
            <person name="Mattick J.S."/>
            <person name="Hume D.A."/>
            <person name="Kai C."/>
            <person name="Sasaki D."/>
            <person name="Tomaru Y."/>
            <person name="Fukuda S."/>
            <person name="Kanamori-Katayama M."/>
            <person name="Suzuki M."/>
            <person name="Aoki J."/>
            <person name="Arakawa T."/>
            <person name="Iida J."/>
            <person name="Imamura K."/>
            <person name="Itoh M."/>
            <person name="Kato T."/>
            <person name="Kawaji H."/>
            <person name="Kawagashira N."/>
            <person name="Kawashima T."/>
            <person name="Kojima M."/>
            <person name="Kondo S."/>
            <person name="Konno H."/>
            <person name="Nakano K."/>
            <person name="Ninomiya N."/>
            <person name="Nishio T."/>
            <person name="Okada M."/>
            <person name="Plessy C."/>
            <person name="Shibata K."/>
            <person name="Shiraki T."/>
            <person name="Suzuki S."/>
            <person name="Tagami M."/>
            <person name="Waki K."/>
            <person name="Watahiki A."/>
            <person name="Okamura-Oho Y."/>
            <person name="Suzuki H."/>
            <person name="Kawai J."/>
            <person name="Hayashizaki Y."/>
        </authorList>
    </citation>
    <scope>NUCLEOTIDE SEQUENCE [LARGE SCALE MRNA]</scope>
    <source>
        <tissue>Embryonic lung</tissue>
    </source>
</reference>
<reference key="3">
    <citation type="journal article" date="2004" name="Genome Res.">
        <title>The status, quality, and expansion of the NIH full-length cDNA project: the Mammalian Gene Collection (MGC).</title>
        <authorList>
            <consortium name="The MGC Project Team"/>
        </authorList>
    </citation>
    <scope>NUCLEOTIDE SEQUENCE [LARGE SCALE MRNA]</scope>
    <source>
        <strain>129</strain>
        <strain>C57BL/6J</strain>
        <tissue>Brain</tissue>
        <tissue>Mammary tumor</tissue>
    </source>
</reference>
<reference key="4">
    <citation type="journal article" date="2014" name="Biochim. Biophys. Acta">
        <title>The c10orf10 gene product is a new link between oxidative stress and autophagy.</title>
        <authorList>
            <person name="Stepp M.W."/>
            <person name="Folz R.J."/>
            <person name="Yu J."/>
            <person name="Zelko I.N."/>
        </authorList>
    </citation>
    <scope>INDUCTION BY HYPOXIA</scope>
</reference>
<feature type="chain" id="PRO_0000079868" description="Protein DEPP1">
    <location>
        <begin position="1"/>
        <end position="205"/>
    </location>
</feature>
<feature type="region of interest" description="Disordered" evidence="2">
    <location>
        <begin position="55"/>
        <end position="171"/>
    </location>
</feature>
<feature type="compositionally biased region" description="Polar residues" evidence="2">
    <location>
        <begin position="55"/>
        <end position="64"/>
    </location>
</feature>
<feature type="compositionally biased region" description="Polar residues" evidence="2">
    <location>
        <begin position="83"/>
        <end position="101"/>
    </location>
</feature>
<feature type="compositionally biased region" description="Basic and acidic residues" evidence="2">
    <location>
        <begin position="138"/>
        <end position="155"/>
    </location>
</feature>
<feature type="sequence conflict" description="In Ref. 2; BAC39837." evidence="5" ref="2">
    <original>CRALASVSSSRPSSILGTLYLHLPVIHEL</original>
    <variation>LPGLSVRLQLSPHQYPRYSLFAPPSDP</variation>
    <location>
        <begin position="177"/>
        <end position="205"/>
    </location>
</feature>
<dbReference type="EMBL" id="AB024924">
    <property type="protein sequence ID" value="BAC87793.1"/>
    <property type="molecule type" value="mRNA"/>
</dbReference>
<dbReference type="EMBL" id="AK078806">
    <property type="protein sequence ID" value="BAC37402.1"/>
    <property type="molecule type" value="mRNA"/>
</dbReference>
<dbReference type="EMBL" id="AK087284">
    <property type="protein sequence ID" value="BAC39837.1"/>
    <property type="molecule type" value="mRNA"/>
</dbReference>
<dbReference type="EMBL" id="BC031533">
    <property type="protein sequence ID" value="AAH31533.1"/>
    <property type="molecule type" value="mRNA"/>
</dbReference>
<dbReference type="EMBL" id="BC058515">
    <property type="protein sequence ID" value="AAH58515.1"/>
    <property type="molecule type" value="mRNA"/>
</dbReference>
<dbReference type="CCDS" id="CCDS51882.1"/>
<dbReference type="RefSeq" id="NP_001160052.1">
    <property type="nucleotide sequence ID" value="NM_001166580.1"/>
</dbReference>
<dbReference type="RefSeq" id="NP_666092.1">
    <property type="nucleotide sequence ID" value="NM_145980.2"/>
</dbReference>
<dbReference type="SMR" id="Q8K2F3"/>
<dbReference type="BioGRID" id="229422">
    <property type="interactions" value="1"/>
</dbReference>
<dbReference type="FunCoup" id="Q8K2F3">
    <property type="interactions" value="354"/>
</dbReference>
<dbReference type="STRING" id="10090.ENSMUSP00000070203"/>
<dbReference type="iPTMnet" id="Q8K2F3"/>
<dbReference type="PhosphoSitePlus" id="Q8K2F3"/>
<dbReference type="PaxDb" id="10090-ENSMUSP00000070203"/>
<dbReference type="Antibodypedia" id="62493">
    <property type="antibodies" value="24 antibodies from 11 providers"/>
</dbReference>
<dbReference type="DNASU" id="213393"/>
<dbReference type="Ensembl" id="ENSMUST00000067354.10">
    <property type="protein sequence ID" value="ENSMUSP00000070203.6"/>
    <property type="gene ID" value="ENSMUSG00000048489.13"/>
</dbReference>
<dbReference type="Ensembl" id="ENSMUST00000178241.4">
    <property type="protein sequence ID" value="ENSMUSP00000136165.2"/>
    <property type="gene ID" value="ENSMUSG00000048489.13"/>
</dbReference>
<dbReference type="GeneID" id="213393"/>
<dbReference type="KEGG" id="mmu:213393"/>
<dbReference type="UCSC" id="uc009dkp.2">
    <property type="organism name" value="mouse"/>
</dbReference>
<dbReference type="AGR" id="MGI:1918730"/>
<dbReference type="CTD" id="11067"/>
<dbReference type="MGI" id="MGI:1918730">
    <property type="gene designation" value="Depp1"/>
</dbReference>
<dbReference type="VEuPathDB" id="HostDB:ENSMUSG00000048489"/>
<dbReference type="eggNOG" id="ENOG502T1TA">
    <property type="taxonomic scope" value="Eukaryota"/>
</dbReference>
<dbReference type="GeneTree" id="ENSGT00390000017909"/>
<dbReference type="HOGENOM" id="CLU_114587_0_0_1"/>
<dbReference type="InParanoid" id="Q8K2F3"/>
<dbReference type="OMA" id="PHRQMDS"/>
<dbReference type="OrthoDB" id="8916819at2759"/>
<dbReference type="PhylomeDB" id="Q8K2F3"/>
<dbReference type="BioGRID-ORCS" id="213393">
    <property type="hits" value="0 hits in 77 CRISPR screens"/>
</dbReference>
<dbReference type="PRO" id="PR:Q8K2F3"/>
<dbReference type="Proteomes" id="UP000000589">
    <property type="component" value="Chromosome 6"/>
</dbReference>
<dbReference type="RNAct" id="Q8K2F3">
    <property type="molecule type" value="protein"/>
</dbReference>
<dbReference type="Bgee" id="ENSMUSG00000048489">
    <property type="expression patterns" value="Expressed in ciliary body and 216 other cell types or tissues"/>
</dbReference>
<dbReference type="ExpressionAtlas" id="Q8K2F3">
    <property type="expression patterns" value="baseline and differential"/>
</dbReference>
<dbReference type="GO" id="GO:0005739">
    <property type="term" value="C:mitochondrion"/>
    <property type="evidence" value="ECO:0007005"/>
    <property type="project" value="MGI"/>
</dbReference>
<dbReference type="GO" id="GO:0005777">
    <property type="term" value="C:peroxisome"/>
    <property type="evidence" value="ECO:0000250"/>
    <property type="project" value="UniProtKB"/>
</dbReference>
<dbReference type="GO" id="GO:0006914">
    <property type="term" value="P:autophagy"/>
    <property type="evidence" value="ECO:0007669"/>
    <property type="project" value="UniProtKB-KW"/>
</dbReference>
<dbReference type="GO" id="GO:0010506">
    <property type="term" value="P:regulation of autophagy"/>
    <property type="evidence" value="ECO:0000250"/>
    <property type="project" value="UniProtKB"/>
</dbReference>
<dbReference type="InterPro" id="IPR020133">
    <property type="entry name" value="DEPP"/>
</dbReference>
<dbReference type="PANTHER" id="PTHR15426">
    <property type="entry name" value="PROTEIN DEPP1"/>
    <property type="match status" value="1"/>
</dbReference>
<dbReference type="PANTHER" id="PTHR15426:SF6">
    <property type="entry name" value="PROTEIN DEPP1"/>
    <property type="match status" value="1"/>
</dbReference>
<dbReference type="Pfam" id="PF15343">
    <property type="entry name" value="DEPP"/>
    <property type="match status" value="1"/>
</dbReference>
<gene>
    <name type="primary">Depp1</name>
    <name type="synonym">Depp</name>
    <name type="synonym">Fseg</name>
</gene>
<sequence>MRSRLLLPVPHLPTIREMSEELSHGAAGQEPPASPSLDDYVRCICQLAQPTSVLDKVTAQSRPNRPSRPAWTREKRRQAESPGDSSLCVSSLQPTLPSPGTDNPLDWLFGKSQGEQADGRGRPNRTGSSDPWDVPRQMGKDTGRLCEARVPEHSLGRKPGPRHQTSDLKSWTSRKSCRALASVSSSRPSSILGTLYLHLPVIHEL</sequence>
<accession>Q8K2F3</accession>
<accession>Q8BU66</accession>
<protein>
    <recommendedName>
        <fullName evidence="5">Protein DEPP1</fullName>
    </recommendedName>
    <alternativeName>
        <fullName evidence="4">Fat-specific-expressed gene protein</fullName>
    </alternativeName>
    <alternativeName>
        <fullName>Protein DEPP</fullName>
    </alternativeName>
</protein>
<name>DEPP1_MOUSE</name>
<proteinExistence type="evidence at transcript level"/>
<evidence type="ECO:0000250" key="1">
    <source>
        <dbReference type="UniProtKB" id="Q9NTK1"/>
    </source>
</evidence>
<evidence type="ECO:0000256" key="2">
    <source>
        <dbReference type="SAM" id="MobiDB-lite"/>
    </source>
</evidence>
<evidence type="ECO:0000269" key="3">
    <source>
    </source>
</evidence>
<evidence type="ECO:0000303" key="4">
    <source ref="1"/>
</evidence>
<evidence type="ECO:0000305" key="5"/>